<gene>
    <name evidence="1" type="primary">rplX</name>
    <name type="ordered locus">ABSDF0434</name>
</gene>
<organism>
    <name type="scientific">Acinetobacter baumannii (strain SDF)</name>
    <dbReference type="NCBI Taxonomy" id="509170"/>
    <lineage>
        <taxon>Bacteria</taxon>
        <taxon>Pseudomonadati</taxon>
        <taxon>Pseudomonadota</taxon>
        <taxon>Gammaproteobacteria</taxon>
        <taxon>Moraxellales</taxon>
        <taxon>Moraxellaceae</taxon>
        <taxon>Acinetobacter</taxon>
        <taxon>Acinetobacter calcoaceticus/baumannii complex</taxon>
    </lineage>
</organism>
<proteinExistence type="inferred from homology"/>
<protein>
    <recommendedName>
        <fullName evidence="1">Large ribosomal subunit protein uL24</fullName>
    </recommendedName>
    <alternativeName>
        <fullName evidence="2">50S ribosomal protein L24</fullName>
    </alternativeName>
</protein>
<comment type="function">
    <text evidence="1">One of two assembly initiator proteins, it binds directly to the 5'-end of the 23S rRNA, where it nucleates assembly of the 50S subunit.</text>
</comment>
<comment type="function">
    <text evidence="1">One of the proteins that surrounds the polypeptide exit tunnel on the outside of the subunit.</text>
</comment>
<comment type="subunit">
    <text evidence="1">Part of the 50S ribosomal subunit.</text>
</comment>
<comment type="similarity">
    <text evidence="1">Belongs to the universal ribosomal protein uL24 family.</text>
</comment>
<evidence type="ECO:0000255" key="1">
    <source>
        <dbReference type="HAMAP-Rule" id="MF_01326"/>
    </source>
</evidence>
<evidence type="ECO:0000305" key="2"/>
<sequence>MAKIKKGDQVIVIAGKEKGKQGTVLSVSEDRVKVEGLNLVKKHQKPNRVTGAEGGIVTQEASLHISNVAILNATTQKADRVGYQVIDGVKTRVYKSTGESVAVAK</sequence>
<dbReference type="EMBL" id="CU468230">
    <property type="protein sequence ID" value="CAO99825.1"/>
    <property type="molecule type" value="Genomic_DNA"/>
</dbReference>
<dbReference type="SMR" id="B0VQS9"/>
<dbReference type="KEGG" id="abm:ABSDF0434"/>
<dbReference type="HOGENOM" id="CLU_093315_2_2_6"/>
<dbReference type="Proteomes" id="UP000001741">
    <property type="component" value="Chromosome"/>
</dbReference>
<dbReference type="GO" id="GO:1990904">
    <property type="term" value="C:ribonucleoprotein complex"/>
    <property type="evidence" value="ECO:0007669"/>
    <property type="project" value="UniProtKB-KW"/>
</dbReference>
<dbReference type="GO" id="GO:0005840">
    <property type="term" value="C:ribosome"/>
    <property type="evidence" value="ECO:0007669"/>
    <property type="project" value="UniProtKB-KW"/>
</dbReference>
<dbReference type="GO" id="GO:0019843">
    <property type="term" value="F:rRNA binding"/>
    <property type="evidence" value="ECO:0007669"/>
    <property type="project" value="UniProtKB-UniRule"/>
</dbReference>
<dbReference type="GO" id="GO:0003735">
    <property type="term" value="F:structural constituent of ribosome"/>
    <property type="evidence" value="ECO:0007669"/>
    <property type="project" value="InterPro"/>
</dbReference>
<dbReference type="GO" id="GO:0006412">
    <property type="term" value="P:translation"/>
    <property type="evidence" value="ECO:0007669"/>
    <property type="project" value="UniProtKB-UniRule"/>
</dbReference>
<dbReference type="CDD" id="cd06089">
    <property type="entry name" value="KOW_RPL26"/>
    <property type="match status" value="1"/>
</dbReference>
<dbReference type="FunFam" id="2.30.30.30:FF:000004">
    <property type="entry name" value="50S ribosomal protein L24"/>
    <property type="match status" value="1"/>
</dbReference>
<dbReference type="Gene3D" id="2.30.30.30">
    <property type="match status" value="1"/>
</dbReference>
<dbReference type="HAMAP" id="MF_01326_B">
    <property type="entry name" value="Ribosomal_uL24_B"/>
    <property type="match status" value="1"/>
</dbReference>
<dbReference type="InterPro" id="IPR005824">
    <property type="entry name" value="KOW"/>
</dbReference>
<dbReference type="InterPro" id="IPR014722">
    <property type="entry name" value="Rib_uL2_dom2"/>
</dbReference>
<dbReference type="InterPro" id="IPR003256">
    <property type="entry name" value="Ribosomal_uL24"/>
</dbReference>
<dbReference type="InterPro" id="IPR005825">
    <property type="entry name" value="Ribosomal_uL24_CS"/>
</dbReference>
<dbReference type="InterPro" id="IPR041988">
    <property type="entry name" value="Ribosomal_uL24_KOW"/>
</dbReference>
<dbReference type="InterPro" id="IPR008991">
    <property type="entry name" value="Translation_prot_SH3-like_sf"/>
</dbReference>
<dbReference type="NCBIfam" id="TIGR01079">
    <property type="entry name" value="rplX_bact"/>
    <property type="match status" value="1"/>
</dbReference>
<dbReference type="PANTHER" id="PTHR12903">
    <property type="entry name" value="MITOCHONDRIAL RIBOSOMAL PROTEIN L24"/>
    <property type="match status" value="1"/>
</dbReference>
<dbReference type="Pfam" id="PF00467">
    <property type="entry name" value="KOW"/>
    <property type="match status" value="1"/>
</dbReference>
<dbReference type="Pfam" id="PF17136">
    <property type="entry name" value="ribosomal_L24"/>
    <property type="match status" value="1"/>
</dbReference>
<dbReference type="SMART" id="SM00739">
    <property type="entry name" value="KOW"/>
    <property type="match status" value="1"/>
</dbReference>
<dbReference type="SUPFAM" id="SSF50104">
    <property type="entry name" value="Translation proteins SH3-like domain"/>
    <property type="match status" value="1"/>
</dbReference>
<dbReference type="PROSITE" id="PS01108">
    <property type="entry name" value="RIBOSOMAL_L24"/>
    <property type="match status" value="1"/>
</dbReference>
<feature type="chain" id="PRO_1000141950" description="Large ribosomal subunit protein uL24">
    <location>
        <begin position="1"/>
        <end position="105"/>
    </location>
</feature>
<accession>B0VQS9</accession>
<keyword id="KW-0687">Ribonucleoprotein</keyword>
<keyword id="KW-0689">Ribosomal protein</keyword>
<keyword id="KW-0694">RNA-binding</keyword>
<keyword id="KW-0699">rRNA-binding</keyword>
<name>RL24_ACIBS</name>
<reference key="1">
    <citation type="journal article" date="2008" name="PLoS ONE">
        <title>Comparative analysis of Acinetobacters: three genomes for three lifestyles.</title>
        <authorList>
            <person name="Vallenet D."/>
            <person name="Nordmann P."/>
            <person name="Barbe V."/>
            <person name="Poirel L."/>
            <person name="Mangenot S."/>
            <person name="Bataille E."/>
            <person name="Dossat C."/>
            <person name="Gas S."/>
            <person name="Kreimeyer A."/>
            <person name="Lenoble P."/>
            <person name="Oztas S."/>
            <person name="Poulain J."/>
            <person name="Segurens B."/>
            <person name="Robert C."/>
            <person name="Abergel C."/>
            <person name="Claverie J.-M."/>
            <person name="Raoult D."/>
            <person name="Medigue C."/>
            <person name="Weissenbach J."/>
            <person name="Cruveiller S."/>
        </authorList>
    </citation>
    <scope>NUCLEOTIDE SEQUENCE [LARGE SCALE GENOMIC DNA]</scope>
    <source>
        <strain>SDF</strain>
    </source>
</reference>